<comment type="function">
    <text>Transforms avian and murine macrophages and fibroblasts as well as murine B-lymphoid cells.</text>
</comment>
<comment type="subunit">
    <text>Efficient DNA binding requires dimerization with another bHLH protein.</text>
</comment>
<comment type="subcellular location">
    <subcellularLocation>
        <location evidence="1">Host nucleus</location>
    </subcellularLocation>
</comment>
<comment type="miscellaneous">
    <text>This protein is synthesized as a Gag-vMyc chimeric protein. The sequence shown here corresponds to the Myc homolog fragment of the chimera.</text>
</comment>
<evidence type="ECO:0000250" key="1"/>
<evidence type="ECO:0000255" key="2">
    <source>
        <dbReference type="PROSITE-ProRule" id="PRU00981"/>
    </source>
</evidence>
<evidence type="ECO:0000256" key="3">
    <source>
        <dbReference type="SAM" id="MobiDB-lite"/>
    </source>
</evidence>
<keyword id="KW-0238">DNA-binding</keyword>
<keyword id="KW-1048">Host nucleus</keyword>
<keyword id="KW-0553">Oncogene</keyword>
<feature type="chain" id="PRO_0000127309" description="Viral myc transforming protein">
    <location>
        <begin position="1"/>
        <end position="416"/>
    </location>
</feature>
<feature type="domain" description="bHLH" evidence="2">
    <location>
        <begin position="331"/>
        <end position="383"/>
    </location>
</feature>
<feature type="region of interest" description="Disordered" evidence="3">
    <location>
        <begin position="144"/>
        <end position="174"/>
    </location>
</feature>
<feature type="region of interest" description="Disordered" evidence="3">
    <location>
        <begin position="203"/>
        <end position="267"/>
    </location>
</feature>
<feature type="region of interest" description="Disordered" evidence="3">
    <location>
        <begin position="315"/>
        <end position="336"/>
    </location>
</feature>
<feature type="region of interest" description="Leucine-zipper">
    <location>
        <begin position="390"/>
        <end position="411"/>
    </location>
</feature>
<feature type="compositionally biased region" description="Pro residues" evidence="3">
    <location>
        <begin position="156"/>
        <end position="169"/>
    </location>
</feature>
<feature type="compositionally biased region" description="Low complexity" evidence="3">
    <location>
        <begin position="212"/>
        <end position="227"/>
    </location>
</feature>
<feature type="compositionally biased region" description="Acidic residues" evidence="3">
    <location>
        <begin position="228"/>
        <end position="240"/>
    </location>
</feature>
<feature type="compositionally biased region" description="Low complexity" evidence="3">
    <location>
        <begin position="245"/>
        <end position="259"/>
    </location>
</feature>
<feature type="compositionally biased region" description="Polar residues" evidence="3">
    <location>
        <begin position="315"/>
        <end position="324"/>
    </location>
</feature>
<gene>
    <name type="primary">MYC</name>
</gene>
<name>MYC_AVIMD</name>
<organism>
    <name type="scientific">Avian myelocytomatosis virus HBI</name>
    <dbReference type="NCBI Taxonomy" id="11915"/>
    <lineage>
        <taxon>Viruses</taxon>
        <taxon>Riboviria</taxon>
        <taxon>Pararnavirae</taxon>
        <taxon>Artverviricota</taxon>
        <taxon>Revtraviricetes</taxon>
        <taxon>Ortervirales</taxon>
        <taxon>Retroviridae</taxon>
    </lineage>
</organism>
<sequence>MPLSASLPSKNYDYDYDSVQPYFYFEEEEENFYLAAQQRGSELQPPAPSEDIWKKFELLPMPPLSPSRRSSLAAASCFPSTADQLEMVTELLGGDMVNQSFICDPDDESFVKSIIIQDCMWSGFSAAAKLEKVVSEKLATYQASRREGGPAAASRPGPPPSGPPPPPAGPAASAGLYLHDLGAAAADCIDPSVVFPYPLSERAPRAAPPGANPAALLGVDTPPTTSSDSEEEQEEDEEIDVVTLAEANESESSTESSTEASEEHCKPHHSPLVLKRCQVNIHQHNYAAPPSTKVEYPAAKRLKLDSGRVLKQISNNRKCSSPRTLDSEENDKRRTHNVLERQRRNELKLRFFALRDQIPEVANNEKAPKVGILKKATEYVLSIQSDEHRLIAEKEQLRRRREQLKHNLEQLKNSRA</sequence>
<proteinExistence type="inferred from homology"/>
<organismHost>
    <name type="scientific">Galliformes</name>
    <dbReference type="NCBI Taxonomy" id="8976"/>
</organismHost>
<dbReference type="EMBL" id="M11784">
    <property type="status" value="NOT_ANNOTATED_CDS"/>
    <property type="molecule type" value="Genomic_DNA"/>
</dbReference>
<dbReference type="SMR" id="P06295"/>
<dbReference type="GO" id="GO:0042025">
    <property type="term" value="C:host cell nucleus"/>
    <property type="evidence" value="ECO:0007669"/>
    <property type="project" value="UniProtKB-SubCell"/>
</dbReference>
<dbReference type="GO" id="GO:0003677">
    <property type="term" value="F:DNA binding"/>
    <property type="evidence" value="ECO:0007669"/>
    <property type="project" value="UniProtKB-KW"/>
</dbReference>
<dbReference type="GO" id="GO:0003700">
    <property type="term" value="F:DNA-binding transcription factor activity"/>
    <property type="evidence" value="ECO:0007669"/>
    <property type="project" value="InterPro"/>
</dbReference>
<dbReference type="GO" id="GO:0046983">
    <property type="term" value="F:protein dimerization activity"/>
    <property type="evidence" value="ECO:0007669"/>
    <property type="project" value="InterPro"/>
</dbReference>
<dbReference type="CDD" id="cd11458">
    <property type="entry name" value="bHLHzip_c-Myc"/>
    <property type="match status" value="1"/>
</dbReference>
<dbReference type="FunFam" id="4.10.280.10:FF:000019">
    <property type="entry name" value="Myc proto-oncogene protein"/>
    <property type="match status" value="1"/>
</dbReference>
<dbReference type="Gene3D" id="4.10.280.10">
    <property type="entry name" value="Helix-loop-helix DNA-binding domain"/>
    <property type="match status" value="1"/>
</dbReference>
<dbReference type="InterPro" id="IPR011598">
    <property type="entry name" value="bHLH_dom"/>
</dbReference>
<dbReference type="InterPro" id="IPR036638">
    <property type="entry name" value="HLH_DNA-bd_sf"/>
</dbReference>
<dbReference type="InterPro" id="IPR003327">
    <property type="entry name" value="Myc-LZ"/>
</dbReference>
<dbReference type="InterPro" id="IPR050433">
    <property type="entry name" value="Myc_transcription_factors"/>
</dbReference>
<dbReference type="InterPro" id="IPR002418">
    <property type="entry name" value="Tscrpt_reg_Myc"/>
</dbReference>
<dbReference type="InterPro" id="IPR012682">
    <property type="entry name" value="Tscrpt_reg_Myc_N"/>
</dbReference>
<dbReference type="PANTHER" id="PTHR45851">
    <property type="entry name" value="MYC PROTO-ONCOGENE"/>
    <property type="match status" value="1"/>
</dbReference>
<dbReference type="Pfam" id="PF00010">
    <property type="entry name" value="HLH"/>
    <property type="match status" value="1"/>
</dbReference>
<dbReference type="Pfam" id="PF02344">
    <property type="entry name" value="Myc-LZ"/>
    <property type="match status" value="1"/>
</dbReference>
<dbReference type="Pfam" id="PF01056">
    <property type="entry name" value="Myc_N"/>
    <property type="match status" value="1"/>
</dbReference>
<dbReference type="PIRSF" id="PIRSF001705">
    <property type="entry name" value="Myc_protein"/>
    <property type="match status" value="1"/>
</dbReference>
<dbReference type="PRINTS" id="PR00044">
    <property type="entry name" value="LEUZIPPRMYC"/>
</dbReference>
<dbReference type="SMART" id="SM00353">
    <property type="entry name" value="HLH"/>
    <property type="match status" value="1"/>
</dbReference>
<dbReference type="SUPFAM" id="SSF47459">
    <property type="entry name" value="HLH, helix-loop-helix DNA-binding domain"/>
    <property type="match status" value="1"/>
</dbReference>
<dbReference type="PROSITE" id="PS50888">
    <property type="entry name" value="BHLH"/>
    <property type="match status" value="1"/>
</dbReference>
<reference key="1">
    <citation type="journal article" date="1985" name="J. Virol.">
        <title>Nucleotide sequence of HBI, a novel recombinant MC29 derivative with altered pathogenic properties.</title>
        <authorList>
            <person name="Smith D.R."/>
            <person name="Vennstrom B."/>
            <person name="Hayman M.J."/>
            <person name="Enrietto P.J."/>
        </authorList>
    </citation>
    <scope>NUCLEOTIDE SEQUENCE [GENOMIC DNA]</scope>
</reference>
<accession>P06295</accession>
<protein>
    <recommendedName>
        <fullName>Viral myc transforming protein</fullName>
        <shortName>v-Myc</shortName>
    </recommendedName>
</protein>